<protein>
    <recommendedName>
        <fullName evidence="1">Glutamyl-tRNA(Gln) amidotransferase subunit A</fullName>
        <shortName evidence="1">Glu-ADT subunit A</shortName>
        <ecNumber evidence="1">6.3.5.7</ecNumber>
    </recommendedName>
</protein>
<comment type="function">
    <text evidence="1">Allows the formation of correctly charged Gln-tRNA(Gln) through the transamidation of misacylated Glu-tRNA(Gln) in organisms which lack glutaminyl-tRNA synthetase. The reaction takes place in the presence of glutamine and ATP through an activated gamma-phospho-Glu-tRNA(Gln).</text>
</comment>
<comment type="catalytic activity">
    <reaction evidence="1">
        <text>L-glutamyl-tRNA(Gln) + L-glutamine + ATP + H2O = L-glutaminyl-tRNA(Gln) + L-glutamate + ADP + phosphate + H(+)</text>
        <dbReference type="Rhea" id="RHEA:17521"/>
        <dbReference type="Rhea" id="RHEA-COMP:9681"/>
        <dbReference type="Rhea" id="RHEA-COMP:9684"/>
        <dbReference type="ChEBI" id="CHEBI:15377"/>
        <dbReference type="ChEBI" id="CHEBI:15378"/>
        <dbReference type="ChEBI" id="CHEBI:29985"/>
        <dbReference type="ChEBI" id="CHEBI:30616"/>
        <dbReference type="ChEBI" id="CHEBI:43474"/>
        <dbReference type="ChEBI" id="CHEBI:58359"/>
        <dbReference type="ChEBI" id="CHEBI:78520"/>
        <dbReference type="ChEBI" id="CHEBI:78521"/>
        <dbReference type="ChEBI" id="CHEBI:456216"/>
        <dbReference type="EC" id="6.3.5.7"/>
    </reaction>
</comment>
<comment type="subunit">
    <text evidence="1">Heterotrimer of A, B and C subunits.</text>
</comment>
<comment type="similarity">
    <text evidence="1">Belongs to the amidase family. GatA subfamily.</text>
</comment>
<name>GATA_RICCN</name>
<gene>
    <name evidence="1" type="primary">gatA</name>
    <name type="ordered locus">RC0194</name>
</gene>
<sequence>MTELNKLTVADSIKGLKNKDFTSTELIGAHIKQIEKHRNLNAYVTDTFDLALKQAEAADQKYAQNNARTLEGIPFAAKDLFCTKGIRTTACSNILKNFIPNYESSVTQNIFDKGGVMLGKTNMDEFAMGSANITSCFGNVISPWKANDDNADLVPGGSSGGSAAAVSGFMASAALGSDTGGSVRQPASFTGLVGFKPTYGRCSRYGMISFASSLDQAGIFTRSVLDSSIMLEAMMGFDEKDSTSIKAEVPELQSAIGSSMKNMKIGVPLSLGEGSIIEPDIMKMWQDTIELLKNAGAEIVDITLPHAKYGVAVYYVIAPAEASSNLSRYDGVRYGLRVERENMTLDEMYEMTRSTGFGEEVKRRIMIGTYVLSSSGMDAYYLKAQKVRRLVANDFNNAFAKVDAILLPAAPTAAFKIGEKQNDPTIMYLNDLFTIPASLAGLPCASVPAGLSARGLPLGIQIIGKQLDEYNVLKVASTIESGVKHIKFEPKGF</sequence>
<proteinExistence type="inferred from homology"/>
<evidence type="ECO:0000255" key="1">
    <source>
        <dbReference type="HAMAP-Rule" id="MF_00120"/>
    </source>
</evidence>
<accession>Q92J75</accession>
<dbReference type="EC" id="6.3.5.7" evidence="1"/>
<dbReference type="EMBL" id="AE006914">
    <property type="protein sequence ID" value="AAL02732.1"/>
    <property type="molecule type" value="Genomic_DNA"/>
</dbReference>
<dbReference type="PIR" id="B97724">
    <property type="entry name" value="B97724"/>
</dbReference>
<dbReference type="RefSeq" id="WP_010976863.1">
    <property type="nucleotide sequence ID" value="NC_003103.1"/>
</dbReference>
<dbReference type="SMR" id="Q92J75"/>
<dbReference type="GeneID" id="927993"/>
<dbReference type="KEGG" id="rco:RC0194"/>
<dbReference type="PATRIC" id="fig|272944.4.peg.224"/>
<dbReference type="HOGENOM" id="CLU_009600_0_3_5"/>
<dbReference type="Proteomes" id="UP000000816">
    <property type="component" value="Chromosome"/>
</dbReference>
<dbReference type="GO" id="GO:0030956">
    <property type="term" value="C:glutamyl-tRNA(Gln) amidotransferase complex"/>
    <property type="evidence" value="ECO:0007669"/>
    <property type="project" value="InterPro"/>
</dbReference>
<dbReference type="GO" id="GO:0005524">
    <property type="term" value="F:ATP binding"/>
    <property type="evidence" value="ECO:0007669"/>
    <property type="project" value="UniProtKB-KW"/>
</dbReference>
<dbReference type="GO" id="GO:0050567">
    <property type="term" value="F:glutaminyl-tRNA synthase (glutamine-hydrolyzing) activity"/>
    <property type="evidence" value="ECO:0007669"/>
    <property type="project" value="UniProtKB-UniRule"/>
</dbReference>
<dbReference type="GO" id="GO:0006412">
    <property type="term" value="P:translation"/>
    <property type="evidence" value="ECO:0007669"/>
    <property type="project" value="UniProtKB-UniRule"/>
</dbReference>
<dbReference type="Gene3D" id="3.90.1300.10">
    <property type="entry name" value="Amidase signature (AS) domain"/>
    <property type="match status" value="1"/>
</dbReference>
<dbReference type="HAMAP" id="MF_00120">
    <property type="entry name" value="GatA"/>
    <property type="match status" value="1"/>
</dbReference>
<dbReference type="InterPro" id="IPR000120">
    <property type="entry name" value="Amidase"/>
</dbReference>
<dbReference type="InterPro" id="IPR020556">
    <property type="entry name" value="Amidase_CS"/>
</dbReference>
<dbReference type="InterPro" id="IPR023631">
    <property type="entry name" value="Amidase_dom"/>
</dbReference>
<dbReference type="InterPro" id="IPR036928">
    <property type="entry name" value="AS_sf"/>
</dbReference>
<dbReference type="InterPro" id="IPR004412">
    <property type="entry name" value="GatA"/>
</dbReference>
<dbReference type="NCBIfam" id="TIGR00132">
    <property type="entry name" value="gatA"/>
    <property type="match status" value="1"/>
</dbReference>
<dbReference type="PANTHER" id="PTHR11895:SF151">
    <property type="entry name" value="GLUTAMYL-TRNA(GLN) AMIDOTRANSFERASE SUBUNIT A"/>
    <property type="match status" value="1"/>
</dbReference>
<dbReference type="PANTHER" id="PTHR11895">
    <property type="entry name" value="TRANSAMIDASE"/>
    <property type="match status" value="1"/>
</dbReference>
<dbReference type="Pfam" id="PF01425">
    <property type="entry name" value="Amidase"/>
    <property type="match status" value="1"/>
</dbReference>
<dbReference type="SUPFAM" id="SSF75304">
    <property type="entry name" value="Amidase signature (AS) enzymes"/>
    <property type="match status" value="1"/>
</dbReference>
<dbReference type="PROSITE" id="PS00571">
    <property type="entry name" value="AMIDASES"/>
    <property type="match status" value="1"/>
</dbReference>
<feature type="chain" id="PRO_0000105196" description="Glutamyl-tRNA(Gln) amidotransferase subunit A">
    <location>
        <begin position="1"/>
        <end position="493"/>
    </location>
</feature>
<feature type="active site" description="Charge relay system" evidence="1">
    <location>
        <position position="78"/>
    </location>
</feature>
<feature type="active site" description="Charge relay system" evidence="1">
    <location>
        <position position="158"/>
    </location>
</feature>
<feature type="active site" description="Acyl-ester intermediate" evidence="1">
    <location>
        <position position="182"/>
    </location>
</feature>
<organism>
    <name type="scientific">Rickettsia conorii (strain ATCC VR-613 / Malish 7)</name>
    <dbReference type="NCBI Taxonomy" id="272944"/>
    <lineage>
        <taxon>Bacteria</taxon>
        <taxon>Pseudomonadati</taxon>
        <taxon>Pseudomonadota</taxon>
        <taxon>Alphaproteobacteria</taxon>
        <taxon>Rickettsiales</taxon>
        <taxon>Rickettsiaceae</taxon>
        <taxon>Rickettsieae</taxon>
        <taxon>Rickettsia</taxon>
        <taxon>spotted fever group</taxon>
    </lineage>
</organism>
<keyword id="KW-0067">ATP-binding</keyword>
<keyword id="KW-0436">Ligase</keyword>
<keyword id="KW-0547">Nucleotide-binding</keyword>
<keyword id="KW-0648">Protein biosynthesis</keyword>
<reference key="1">
    <citation type="journal article" date="2001" name="Science">
        <title>Mechanisms of evolution in Rickettsia conorii and R. prowazekii.</title>
        <authorList>
            <person name="Ogata H."/>
            <person name="Audic S."/>
            <person name="Renesto-Audiffren P."/>
            <person name="Fournier P.-E."/>
            <person name="Barbe V."/>
            <person name="Samson D."/>
            <person name="Roux V."/>
            <person name="Cossart P."/>
            <person name="Weissenbach J."/>
            <person name="Claverie J.-M."/>
            <person name="Raoult D."/>
        </authorList>
    </citation>
    <scope>NUCLEOTIDE SEQUENCE [LARGE SCALE GENOMIC DNA]</scope>
    <source>
        <strain>ATCC VR-613 / Malish 7</strain>
    </source>
</reference>